<evidence type="ECO:0000255" key="1">
    <source>
        <dbReference type="HAMAP-Rule" id="MF_00590"/>
    </source>
</evidence>
<keyword id="KW-0173">Coenzyme A biosynthesis</keyword>
<keyword id="KW-0342">GTP-binding</keyword>
<keyword id="KW-0418">Kinase</keyword>
<keyword id="KW-0547">Nucleotide-binding</keyword>
<keyword id="KW-1185">Reference proteome</keyword>
<keyword id="KW-0808">Transferase</keyword>
<organism>
    <name type="scientific">Nitrosopumilus maritimus (strain SCM1)</name>
    <dbReference type="NCBI Taxonomy" id="436308"/>
    <lineage>
        <taxon>Archaea</taxon>
        <taxon>Nitrososphaerota</taxon>
        <taxon>Nitrososphaeria</taxon>
        <taxon>Nitrosopumilales</taxon>
        <taxon>Nitrosopumilaceae</taxon>
        <taxon>Nitrosopumilus</taxon>
    </lineage>
</organism>
<protein>
    <recommendedName>
        <fullName evidence="1">GTP-dependent dephospho-CoA kinase</fullName>
        <ecNumber evidence="1">2.7.1.237</ecNumber>
    </recommendedName>
    <alternativeName>
        <fullName evidence="1">Dephospho-coenzyme A kinase</fullName>
        <shortName evidence="1">DPCK</shortName>
    </alternativeName>
</protein>
<accession>A9A1F0</accession>
<reference key="1">
    <citation type="journal article" date="2010" name="Proc. Natl. Acad. Sci. U.S.A.">
        <title>Nitrosopumilus maritimus genome reveals unique mechanisms for nitrification and autotrophy in globally distributed marine crenarchaea.</title>
        <authorList>
            <person name="Walker C.B."/>
            <person name="de la Torre J.R."/>
            <person name="Klotz M.G."/>
            <person name="Urakawa H."/>
            <person name="Pinel N."/>
            <person name="Arp D.J."/>
            <person name="Brochier-Armanet C."/>
            <person name="Chain P.S."/>
            <person name="Chan P.P."/>
            <person name="Gollabgir A."/>
            <person name="Hemp J."/>
            <person name="Hugler M."/>
            <person name="Karr E.A."/>
            <person name="Konneke M."/>
            <person name="Shin M."/>
            <person name="Lawton T.J."/>
            <person name="Lowe T."/>
            <person name="Martens-Habbena W."/>
            <person name="Sayavedra-Soto L.A."/>
            <person name="Lang D."/>
            <person name="Sievert S.M."/>
            <person name="Rosenzweig A.C."/>
            <person name="Manning G."/>
            <person name="Stahl D.A."/>
        </authorList>
    </citation>
    <scope>NUCLEOTIDE SEQUENCE [LARGE SCALE GENOMIC DNA]</scope>
    <source>
        <strain>SCM1</strain>
    </source>
</reference>
<comment type="function">
    <text evidence="1">Catalyzes the GTP-dependent phosphorylation of the 3'-hydroxyl group of dephosphocoenzyme A to form coenzyme A (CoA).</text>
</comment>
<comment type="catalytic activity">
    <reaction evidence="1">
        <text>3'-dephospho-CoA + GTP = GDP + CoA + H(+)</text>
        <dbReference type="Rhea" id="RHEA:61156"/>
        <dbReference type="ChEBI" id="CHEBI:15378"/>
        <dbReference type="ChEBI" id="CHEBI:37565"/>
        <dbReference type="ChEBI" id="CHEBI:57287"/>
        <dbReference type="ChEBI" id="CHEBI:57328"/>
        <dbReference type="ChEBI" id="CHEBI:58189"/>
        <dbReference type="EC" id="2.7.1.237"/>
    </reaction>
</comment>
<comment type="pathway">
    <text evidence="1">Cofactor biosynthesis; coenzyme A biosynthesis.</text>
</comment>
<comment type="similarity">
    <text evidence="1">Belongs to the GTP-dependent DPCK family.</text>
</comment>
<name>DPCKG_NITMS</name>
<gene>
    <name type="ordered locus">Nmar_1233</name>
</gene>
<sequence>MKIPLGILLSENQADKENILKHLEENSYIITVGDRTTEKMIDFDLIPSLQIVDGIEKREKREPPKLVNTTEITVDNPPAEITSQSIDVIKKAFSMESPVRILVTGEEDLLVLPVCIHAPENSVVMYGQPNEGLVIVKITSEIRNKVQSLLDLME</sequence>
<feature type="chain" id="PRO_0000380064" description="GTP-dependent dephospho-CoA kinase">
    <location>
        <begin position="1"/>
        <end position="154"/>
    </location>
</feature>
<feature type="binding site" evidence="1">
    <location>
        <position position="34"/>
    </location>
    <ligand>
        <name>GTP</name>
        <dbReference type="ChEBI" id="CHEBI:37565"/>
    </ligand>
</feature>
<feature type="binding site" evidence="1">
    <location>
        <position position="53"/>
    </location>
    <ligand>
        <name>GTP</name>
        <dbReference type="ChEBI" id="CHEBI:37565"/>
    </ligand>
</feature>
<feature type="binding site" evidence="1">
    <location>
        <position position="107"/>
    </location>
    <ligand>
        <name>GTP</name>
        <dbReference type="ChEBI" id="CHEBI:37565"/>
    </ligand>
</feature>
<proteinExistence type="inferred from homology"/>
<dbReference type="EC" id="2.7.1.237" evidence="1"/>
<dbReference type="EMBL" id="CP000866">
    <property type="protein sequence ID" value="ABX13129.1"/>
    <property type="molecule type" value="Genomic_DNA"/>
</dbReference>
<dbReference type="RefSeq" id="WP_012215616.1">
    <property type="nucleotide sequence ID" value="NC_010085.1"/>
</dbReference>
<dbReference type="SMR" id="A9A1F0"/>
<dbReference type="FunCoup" id="A9A1F0">
    <property type="interactions" value="7"/>
</dbReference>
<dbReference type="STRING" id="436308.Nmar_1233"/>
<dbReference type="EnsemblBacteria" id="ABX13129">
    <property type="protein sequence ID" value="ABX13129"/>
    <property type="gene ID" value="Nmar_1233"/>
</dbReference>
<dbReference type="GeneID" id="5773068"/>
<dbReference type="KEGG" id="nmr:Nmar_1233"/>
<dbReference type="eggNOG" id="arCOG04076">
    <property type="taxonomic scope" value="Archaea"/>
</dbReference>
<dbReference type="HOGENOM" id="CLU_120795_1_0_2"/>
<dbReference type="InParanoid" id="A9A1F0"/>
<dbReference type="OrthoDB" id="15447at2157"/>
<dbReference type="PhylomeDB" id="A9A1F0"/>
<dbReference type="UniPathway" id="UPA00241"/>
<dbReference type="Proteomes" id="UP000000792">
    <property type="component" value="Chromosome"/>
</dbReference>
<dbReference type="GO" id="GO:0005525">
    <property type="term" value="F:GTP binding"/>
    <property type="evidence" value="ECO:0007669"/>
    <property type="project" value="UniProtKB-UniRule"/>
</dbReference>
<dbReference type="GO" id="GO:0016301">
    <property type="term" value="F:kinase activity"/>
    <property type="evidence" value="ECO:0007669"/>
    <property type="project" value="UniProtKB-UniRule"/>
</dbReference>
<dbReference type="GO" id="GO:0015937">
    <property type="term" value="P:coenzyme A biosynthetic process"/>
    <property type="evidence" value="ECO:0007669"/>
    <property type="project" value="UniProtKB-UniRule"/>
</dbReference>
<dbReference type="HAMAP" id="MF_00590">
    <property type="entry name" value="Dephospho_CoA_kinase_GTP_dep"/>
    <property type="match status" value="1"/>
</dbReference>
<dbReference type="InterPro" id="IPR007164">
    <property type="entry name" value="GTP-dep_dephospho-CoA_kin"/>
</dbReference>
<dbReference type="PANTHER" id="PTHR40732:SF1">
    <property type="entry name" value="GTP-DEPENDENT DEPHOSPHO-COA KINASE"/>
    <property type="match status" value="1"/>
</dbReference>
<dbReference type="PANTHER" id="PTHR40732">
    <property type="entry name" value="UPF0218 PROTEIN TK1697"/>
    <property type="match status" value="1"/>
</dbReference>
<dbReference type="Pfam" id="PF04019">
    <property type="entry name" value="DUF359"/>
    <property type="match status" value="1"/>
</dbReference>
<dbReference type="PIRSF" id="PIRSF006533">
    <property type="entry name" value="UCP006533"/>
    <property type="match status" value="1"/>
</dbReference>